<gene>
    <name type="primary">HSFB4A</name>
    <name type="synonym">HSF20</name>
    <name type="ordered locus">Os08g0471000</name>
    <name type="ordered locus">LOC_Os08g36700</name>
    <name type="ORF">P0461F06.21</name>
</gene>
<accession>Q6Z9R8</accession>
<accession>A0A0P0XGX7</accession>
<proteinExistence type="inferred from homology"/>
<dbReference type="EMBL" id="AP004693">
    <property type="protein sequence ID" value="BAD09860.1"/>
    <property type="molecule type" value="Genomic_DNA"/>
</dbReference>
<dbReference type="EMBL" id="AP014964">
    <property type="protein sequence ID" value="BAT05843.1"/>
    <property type="molecule type" value="Genomic_DNA"/>
</dbReference>
<dbReference type="SMR" id="Q6Z9R8"/>
<dbReference type="FunCoup" id="Q6Z9R8">
    <property type="interactions" value="228"/>
</dbReference>
<dbReference type="STRING" id="39947.Q6Z9R8"/>
<dbReference type="PaxDb" id="39947-Q6Z9R8"/>
<dbReference type="EnsemblPlants" id="Os08t0471000-00">
    <property type="protein sequence ID" value="Os08t0471000-00"/>
    <property type="gene ID" value="Os08g0471000"/>
</dbReference>
<dbReference type="GeneID" id="107275533"/>
<dbReference type="Gramene" id="Os08t0471000-00">
    <property type="protein sequence ID" value="Os08t0471000-00"/>
    <property type="gene ID" value="Os08g0471000"/>
</dbReference>
<dbReference type="KEGG" id="osa:107275533"/>
<dbReference type="eggNOG" id="KOG0627">
    <property type="taxonomic scope" value="Eukaryota"/>
</dbReference>
<dbReference type="HOGENOM" id="CLU_030308_3_1_1"/>
<dbReference type="InParanoid" id="Q6Z9R8"/>
<dbReference type="OMA" id="MQDNHRL"/>
<dbReference type="OrthoDB" id="60033at2759"/>
<dbReference type="PlantReactome" id="R-OSA-9826782">
    <property type="pathway name" value="Regulation of seed germination and coleoptile growth under submergence and normal gravity environment"/>
</dbReference>
<dbReference type="Proteomes" id="UP000000763">
    <property type="component" value="Chromosome 8"/>
</dbReference>
<dbReference type="Proteomes" id="UP000059680">
    <property type="component" value="Chromosome 8"/>
</dbReference>
<dbReference type="GO" id="GO:0005634">
    <property type="term" value="C:nucleus"/>
    <property type="evidence" value="ECO:0000318"/>
    <property type="project" value="GO_Central"/>
</dbReference>
<dbReference type="GO" id="GO:0003700">
    <property type="term" value="F:DNA-binding transcription factor activity"/>
    <property type="evidence" value="ECO:0000318"/>
    <property type="project" value="GO_Central"/>
</dbReference>
<dbReference type="GO" id="GO:0043565">
    <property type="term" value="F:sequence-specific DNA binding"/>
    <property type="evidence" value="ECO:0007669"/>
    <property type="project" value="InterPro"/>
</dbReference>
<dbReference type="GO" id="GO:0006357">
    <property type="term" value="P:regulation of transcription by RNA polymerase II"/>
    <property type="evidence" value="ECO:0000318"/>
    <property type="project" value="GO_Central"/>
</dbReference>
<dbReference type="FunFam" id="1.10.10.10:FF:000037">
    <property type="entry name" value="Heat stress transcription factor B-4"/>
    <property type="match status" value="1"/>
</dbReference>
<dbReference type="Gene3D" id="1.10.10.10">
    <property type="entry name" value="Winged helix-like DNA-binding domain superfamily/Winged helix DNA-binding domain"/>
    <property type="match status" value="1"/>
</dbReference>
<dbReference type="InterPro" id="IPR000232">
    <property type="entry name" value="HSF_DNA-bd"/>
</dbReference>
<dbReference type="InterPro" id="IPR036388">
    <property type="entry name" value="WH-like_DNA-bd_sf"/>
</dbReference>
<dbReference type="InterPro" id="IPR036390">
    <property type="entry name" value="WH_DNA-bd_sf"/>
</dbReference>
<dbReference type="PANTHER" id="PTHR10015">
    <property type="entry name" value="HEAT SHOCK TRANSCRIPTION FACTOR"/>
    <property type="match status" value="1"/>
</dbReference>
<dbReference type="PANTHER" id="PTHR10015:SF411">
    <property type="entry name" value="HEAT STRESS TRANSCRIPTION FACTOR B-4A-RELATED"/>
    <property type="match status" value="1"/>
</dbReference>
<dbReference type="Pfam" id="PF00447">
    <property type="entry name" value="HSF_DNA-bind"/>
    <property type="match status" value="1"/>
</dbReference>
<dbReference type="SMART" id="SM00415">
    <property type="entry name" value="HSF"/>
    <property type="match status" value="1"/>
</dbReference>
<dbReference type="SUPFAM" id="SSF46785">
    <property type="entry name" value="Winged helix' DNA-binding domain"/>
    <property type="match status" value="1"/>
</dbReference>
<dbReference type="PROSITE" id="PS00434">
    <property type="entry name" value="HSF_DOMAIN"/>
    <property type="match status" value="1"/>
</dbReference>
<name>HFB4A_ORYSJ</name>
<sequence>MEWEEESEAARQKAAAASASVVPAPFLTKTYQLVDDPATDHVVSWEDDDGGESASSFVVWRPPEFARDILPNYFKHSNFSSFVRQLNTYGFRKVVPERWEFANEFFRKGEKQLLCEIHRRKSAAATWPPFPPPPPPFFAPRHFAAGAFFRHGDGMLHGRLGALVTTTERRHWFESAALPVAPSSRLLSQLGPVIAPARRAAATPEEEALMQENHRLLRGNAALVQELAHMRKLYSDIIYFVQNHVRPVAPSPAAAAALHGLGVLRPPPAGGKAPASEVRGASGRSATSSSSLTVAEDQPTLLALRLPRTTEKIINEVSGGNGGGSTKLFGVHLSSADEQTSSGASRKRSPPQEQPPTSPAPKRTLVVEHSELRLSIVSPP</sequence>
<keyword id="KW-0238">DNA-binding</keyword>
<keyword id="KW-0539">Nucleus</keyword>
<keyword id="KW-0597">Phosphoprotein</keyword>
<keyword id="KW-1185">Reference proteome</keyword>
<keyword id="KW-0346">Stress response</keyword>
<keyword id="KW-0804">Transcription</keyword>
<keyword id="KW-0805">Transcription regulation</keyword>
<reference key="1">
    <citation type="journal article" date="2005" name="Nature">
        <title>The map-based sequence of the rice genome.</title>
        <authorList>
            <consortium name="International rice genome sequencing project (IRGSP)"/>
        </authorList>
    </citation>
    <scope>NUCLEOTIDE SEQUENCE [LARGE SCALE GENOMIC DNA]</scope>
    <source>
        <strain>cv. Nipponbare</strain>
    </source>
</reference>
<reference key="2">
    <citation type="journal article" date="2013" name="Rice">
        <title>Improvement of the Oryza sativa Nipponbare reference genome using next generation sequence and optical map data.</title>
        <authorList>
            <person name="Kawahara Y."/>
            <person name="de la Bastide M."/>
            <person name="Hamilton J.P."/>
            <person name="Kanamori H."/>
            <person name="McCombie W.R."/>
            <person name="Ouyang S."/>
            <person name="Schwartz D.C."/>
            <person name="Tanaka T."/>
            <person name="Wu J."/>
            <person name="Zhou S."/>
            <person name="Childs K.L."/>
            <person name="Davidson R.M."/>
            <person name="Lin H."/>
            <person name="Quesada-Ocampo L."/>
            <person name="Vaillancourt B."/>
            <person name="Sakai H."/>
            <person name="Lee S.S."/>
            <person name="Kim J."/>
            <person name="Numa H."/>
            <person name="Itoh T."/>
            <person name="Buell C.R."/>
            <person name="Matsumoto T."/>
        </authorList>
    </citation>
    <scope>GENOME REANNOTATION</scope>
    <source>
        <strain>cv. Nipponbare</strain>
    </source>
</reference>
<reference key="3">
    <citation type="journal article" date="2004" name="J. Biosci.">
        <title>Heat stress response in plants: a complex game with chaperones and more than twenty heat stress transcription factors.</title>
        <authorList>
            <person name="Baniwal S.K."/>
            <person name="Bharti K."/>
            <person name="Chan K.Y."/>
            <person name="Fauth M."/>
            <person name="Ganguli A."/>
            <person name="Kotak S."/>
            <person name="Mishra S.K."/>
            <person name="Nover L."/>
            <person name="Port M."/>
            <person name="Scharf K.-D."/>
            <person name="Tripp J."/>
            <person name="Weber C."/>
            <person name="Zielinski D."/>
            <person name="von Koskull-Doering P."/>
        </authorList>
    </citation>
    <scope>GENE FAMILY</scope>
    <scope>NOMENCLATURE</scope>
</reference>
<reference key="4">
    <citation type="journal article" date="2008" name="J. Genet. Genomics">
        <title>Genome-wide analysis of heat shock transcription factor families in rice and Arabidopsis.</title>
        <authorList>
            <person name="Guo J."/>
            <person name="Wu J."/>
            <person name="Ji Q."/>
            <person name="Wang C."/>
            <person name="Luo L."/>
            <person name="Yuan Y."/>
            <person name="Wang Y."/>
            <person name="Wang J."/>
        </authorList>
    </citation>
    <scope>GENE FAMILY</scope>
    <scope>NOMENCLATURE</scope>
</reference>
<feature type="chain" id="PRO_0000350837" description="Putative heat stress transcription factor B-4a">
    <location>
        <begin position="1"/>
        <end position="380"/>
    </location>
</feature>
<feature type="region of interest" description="Hydrophobic repeat HR-A/B">
    <location>
        <begin position="216"/>
        <end position="245"/>
    </location>
</feature>
<feature type="region of interest" description="Disordered" evidence="3">
    <location>
        <begin position="268"/>
        <end position="296"/>
    </location>
</feature>
<feature type="region of interest" description="Disordered" evidence="3">
    <location>
        <begin position="314"/>
        <end position="380"/>
    </location>
</feature>
<feature type="short sequence motif" description="Nuclear localization signal" evidence="2">
    <location>
        <begin position="346"/>
        <end position="348"/>
    </location>
</feature>
<feature type="compositionally biased region" description="Low complexity" evidence="3">
    <location>
        <begin position="278"/>
        <end position="296"/>
    </location>
</feature>
<organism>
    <name type="scientific">Oryza sativa subsp. japonica</name>
    <name type="common">Rice</name>
    <dbReference type="NCBI Taxonomy" id="39947"/>
    <lineage>
        <taxon>Eukaryota</taxon>
        <taxon>Viridiplantae</taxon>
        <taxon>Streptophyta</taxon>
        <taxon>Embryophyta</taxon>
        <taxon>Tracheophyta</taxon>
        <taxon>Spermatophyta</taxon>
        <taxon>Magnoliopsida</taxon>
        <taxon>Liliopsida</taxon>
        <taxon>Poales</taxon>
        <taxon>Poaceae</taxon>
        <taxon>BOP clade</taxon>
        <taxon>Oryzoideae</taxon>
        <taxon>Oryzeae</taxon>
        <taxon>Oryzinae</taxon>
        <taxon>Oryza</taxon>
        <taxon>Oryza sativa</taxon>
    </lineage>
</organism>
<comment type="function">
    <text evidence="1">Transcriptional regulator that specifically binds DNA of heat shock promoter elements (HSE).</text>
</comment>
<comment type="subunit">
    <text evidence="1">Homotrimer.</text>
</comment>
<comment type="subcellular location">
    <subcellularLocation>
        <location evidence="4">Nucleus</location>
    </subcellularLocation>
</comment>
<comment type="domain">
    <text>The hydrophobic-rich region (HR-A/B) corresponds to the oligomerization domain.</text>
</comment>
<comment type="PTM">
    <text evidence="1">Exhibits temperature-dependent phosphorylation.</text>
</comment>
<comment type="similarity">
    <text evidence="4">Belongs to the HSF family. Class B subfamily.</text>
</comment>
<evidence type="ECO:0000250" key="1"/>
<evidence type="ECO:0000255" key="2"/>
<evidence type="ECO:0000256" key="3">
    <source>
        <dbReference type="SAM" id="MobiDB-lite"/>
    </source>
</evidence>
<evidence type="ECO:0000305" key="4"/>
<protein>
    <recommendedName>
        <fullName>Putative heat stress transcription factor B-4a</fullName>
    </recommendedName>
    <alternativeName>
        <fullName>Heat stress transcription factor 20</fullName>
        <shortName>OsHsf-20</shortName>
    </alternativeName>
</protein>